<evidence type="ECO:0000250" key="1"/>
<evidence type="ECO:0000269" key="2">
    <source>
    </source>
</evidence>
<evidence type="ECO:0000305" key="3"/>
<name>IXPDE_UNKP</name>
<protein>
    <recommendedName>
        <fullName>Isoxanthopterin deaminase</fullName>
        <ecNumber>3.5.4.11</ecNumber>
    </recommendedName>
</protein>
<sequence length="482" mass="51752">MTTYDTQPSTLIRNAAAIMTGGRGTADDPSRVPGPDIRIVGDTIDAIGALAPRPGETIVDATDCVIYPAWVNTHHHLFQSLLKGEPAGLDATLTPWLAATPYRFRALFDERRFRLAARIGLIELARSGCATVADHNYVYYPGMPFDSSAILFEEAEKLGLRFVLLRGGATQTRQLEADLPTALRPETLDAYVADIERLAARYHDASPRAMRRVVMAPTTVLYSISPREMRETAAVARRLGLRMHSHLSETVGYQDSAYSMYGKSPVAFCGEHDWLGSDVWYAHLVKVDADEIALLAQTGTGVAHCPQSNGRLGSGICPVREMADAGVPVSIGVDGAASNEAADMISEVHMTWLAQRARLGMLAQPAYRGGSFEGGAGAASIAEVIHWGTAGGARVMGLDEVGKVAVGYAADIAVYRLDDPRYFGLHDPAIGPVASGGRPSVMALFSAGKRVVVDDLIEGVDIKELGGEARRVVRELLREVVV</sequence>
<comment type="catalytic activity">
    <reaction evidence="2">
        <text>a 2-amino-4-hydroxypteridine + H2O + H(+) = a 2,4-dihydroxypteridine + NH4(+)</text>
        <dbReference type="Rhea" id="RHEA:36055"/>
        <dbReference type="ChEBI" id="CHEBI:15377"/>
        <dbReference type="ChEBI" id="CHEBI:15378"/>
        <dbReference type="ChEBI" id="CHEBI:28938"/>
        <dbReference type="ChEBI" id="CHEBI:73184"/>
        <dbReference type="ChEBI" id="CHEBI:73186"/>
        <dbReference type="EC" id="3.5.4.11"/>
    </reaction>
</comment>
<comment type="cofactor">
    <cofactor evidence="2">
        <name>Zn(2+)</name>
        <dbReference type="ChEBI" id="CHEBI:29105"/>
    </cofactor>
    <text evidence="2">Binds 1 zinc ion per subunit.</text>
</comment>
<comment type="biophysicochemical properties">
    <kinetics>
        <KM evidence="2">8 uM for isoxanthopterin</KM>
    </kinetics>
</comment>
<comment type="similarity">
    <text evidence="3">Belongs to the metallo-dependent hydrolases superfamily. ATZ/TRZ family.</text>
</comment>
<proteinExistence type="evidence at protein level"/>
<organism>
    <name type="scientific">Unknown prokaryotic organism</name>
    <dbReference type="NCBI Taxonomy" id="2725"/>
    <lineage>
        <taxon>Bacteria</taxon>
        <taxon>environmental samples</taxon>
    </lineage>
</organism>
<keyword id="KW-0002">3D-structure</keyword>
<keyword id="KW-0378">Hydrolase</keyword>
<keyword id="KW-0479">Metal-binding</keyword>
<keyword id="KW-0862">Zinc</keyword>
<dbReference type="EC" id="3.5.4.11"/>
<dbReference type="EMBL" id="EP885471">
    <property type="protein sequence ID" value="EDA75601.1"/>
    <property type="molecule type" value="Genomic_DNA"/>
</dbReference>
<dbReference type="PDB" id="2PAJ">
    <property type="method" value="X-ray"/>
    <property type="resolution" value="2.70 A"/>
    <property type="chains" value="A=1-482"/>
</dbReference>
<dbReference type="PDBsum" id="2PAJ"/>
<dbReference type="SMR" id="P0CI72"/>
<dbReference type="BRENDA" id="3.5.4.11">
    <property type="organism ID" value="12464"/>
</dbReference>
<dbReference type="SABIO-RK" id="P0CI72"/>
<dbReference type="GO" id="GO:0046872">
    <property type="term" value="F:metal ion binding"/>
    <property type="evidence" value="ECO:0007669"/>
    <property type="project" value="UniProtKB-KW"/>
</dbReference>
<dbReference type="GO" id="GO:0050228">
    <property type="term" value="F:pterin deaminase activity"/>
    <property type="evidence" value="ECO:0007669"/>
    <property type="project" value="UniProtKB-EC"/>
</dbReference>
<dbReference type="CDD" id="cd01298">
    <property type="entry name" value="ATZ_TRZ_like"/>
    <property type="match status" value="1"/>
</dbReference>
<dbReference type="Gene3D" id="1.20.5.140">
    <property type="match status" value="1"/>
</dbReference>
<dbReference type="Gene3D" id="3.20.20.140">
    <property type="entry name" value="Metal-dependent hydrolases"/>
    <property type="match status" value="1"/>
</dbReference>
<dbReference type="Gene3D" id="2.30.40.10">
    <property type="entry name" value="Urease, subunit C, domain 1"/>
    <property type="match status" value="2"/>
</dbReference>
<dbReference type="InterPro" id="IPR006680">
    <property type="entry name" value="Amidohydro-rel"/>
</dbReference>
<dbReference type="InterPro" id="IPR011059">
    <property type="entry name" value="Metal-dep_hydrolase_composite"/>
</dbReference>
<dbReference type="InterPro" id="IPR032466">
    <property type="entry name" value="Metal_Hydrolase"/>
</dbReference>
<dbReference type="InterPro" id="IPR050287">
    <property type="entry name" value="MTA/SAH_deaminase"/>
</dbReference>
<dbReference type="NCBIfam" id="NF009059">
    <property type="entry name" value="PRK12393.1"/>
    <property type="match status" value="1"/>
</dbReference>
<dbReference type="PANTHER" id="PTHR43794:SF11">
    <property type="entry name" value="AMIDOHYDROLASE-RELATED DOMAIN-CONTAINING PROTEIN"/>
    <property type="match status" value="1"/>
</dbReference>
<dbReference type="PANTHER" id="PTHR43794">
    <property type="entry name" value="AMINOHYDROLASE SSNA-RELATED"/>
    <property type="match status" value="1"/>
</dbReference>
<dbReference type="Pfam" id="PF01979">
    <property type="entry name" value="Amidohydro_1"/>
    <property type="match status" value="1"/>
</dbReference>
<dbReference type="SUPFAM" id="SSF51338">
    <property type="entry name" value="Composite domain of metallo-dependent hydrolases"/>
    <property type="match status" value="1"/>
</dbReference>
<dbReference type="SUPFAM" id="SSF51556">
    <property type="entry name" value="Metallo-dependent hydrolases"/>
    <property type="match status" value="1"/>
</dbReference>
<feature type="chain" id="PRO_0000403657" description="Isoxanthopterin deaminase">
    <location>
        <begin position="1"/>
        <end position="482"/>
    </location>
</feature>
<feature type="binding site">
    <location>
        <position position="74"/>
    </location>
    <ligand>
        <name>Zn(2+)</name>
        <dbReference type="ChEBI" id="CHEBI:29105"/>
    </ligand>
</feature>
<feature type="binding site">
    <location>
        <position position="76"/>
    </location>
    <ligand>
        <name>Zn(2+)</name>
        <dbReference type="ChEBI" id="CHEBI:29105"/>
    </ligand>
</feature>
<feature type="binding site" evidence="1">
    <location>
        <position position="79"/>
    </location>
    <ligand>
        <name>substrate</name>
    </ligand>
</feature>
<feature type="binding site">
    <location>
        <position position="246"/>
    </location>
    <ligand>
        <name>Zn(2+)</name>
        <dbReference type="ChEBI" id="CHEBI:29105"/>
    </ligand>
</feature>
<feature type="binding site" evidence="1">
    <location>
        <position position="249"/>
    </location>
    <ligand>
        <name>substrate</name>
    </ligand>
</feature>
<feature type="binding site" evidence="1">
    <location>
        <position position="283"/>
    </location>
    <ligand>
        <name>substrate</name>
    </ligand>
</feature>
<feature type="binding site">
    <location>
        <position position="283"/>
    </location>
    <ligand>
        <name>Zn(2+)</name>
        <dbReference type="ChEBI" id="CHEBI:29105"/>
    </ligand>
</feature>
<feature type="binding site">
    <location>
        <position position="334"/>
    </location>
    <ligand>
        <name>Zn(2+)</name>
        <dbReference type="ChEBI" id="CHEBI:29105"/>
    </ligand>
</feature>
<accession>P0CI72</accession>
<reference key="1">
    <citation type="journal article" date="2010" name="Biochemistry">
        <title>Discovery and structure determination of the orphan enzyme isoxanthopterin deaminase.</title>
        <authorList>
            <person name="Hall R.S."/>
            <person name="Agarwal R."/>
            <person name="Hitchcock D."/>
            <person name="Sauder J.M."/>
            <person name="Burley S.K."/>
            <person name="Swaminathan S."/>
            <person name="Raushel F.M."/>
        </authorList>
    </citation>
    <scope>X-RAY CRYSTALLOGRAPHY (2.7 ANGSTROMS) IN COMPLEX WITH ZINC IONS</scope>
    <scope>NUCLEOTIDE SEQUENCE [GENOMIC DNA]</scope>
    <scope>CATALYTIC ACTIVITY</scope>
    <scope>COFACTOR</scope>
    <scope>BIOPHYSICOCHEMICAL PROPERTIES</scope>
</reference>